<keyword id="KW-0002">3D-structure</keyword>
<keyword id="KW-0560">Oxidoreductase</keyword>
<keyword id="KW-1185">Reference proteome</keyword>
<protein>
    <recommendedName>
        <fullName>Uncharacterized oxidoreductase YhhX</fullName>
        <ecNumber>1.-.-.-</ecNumber>
    </recommendedName>
</protein>
<comment type="similarity">
    <text evidence="1">Belongs to the Gfo/Idh/MocA family. Biliverdin reductase subfamily.</text>
</comment>
<name>YHHX_ECOLI</name>
<reference key="1">
    <citation type="journal article" date="1997" name="Science">
        <title>The complete genome sequence of Escherichia coli K-12.</title>
        <authorList>
            <person name="Blattner F.R."/>
            <person name="Plunkett G. III"/>
            <person name="Bloch C.A."/>
            <person name="Perna N.T."/>
            <person name="Burland V."/>
            <person name="Riley M."/>
            <person name="Collado-Vides J."/>
            <person name="Glasner J.D."/>
            <person name="Rode C.K."/>
            <person name="Mayhew G.F."/>
            <person name="Gregor J."/>
            <person name="Davis N.W."/>
            <person name="Kirkpatrick H.A."/>
            <person name="Goeden M.A."/>
            <person name="Rose D.J."/>
            <person name="Mau B."/>
            <person name="Shao Y."/>
        </authorList>
    </citation>
    <scope>NUCLEOTIDE SEQUENCE [LARGE SCALE GENOMIC DNA]</scope>
    <source>
        <strain>K12 / MG1655 / ATCC 47076</strain>
    </source>
</reference>
<reference key="2">
    <citation type="journal article" date="2006" name="Mol. Syst. Biol.">
        <title>Highly accurate genome sequences of Escherichia coli K-12 strains MG1655 and W3110.</title>
        <authorList>
            <person name="Hayashi K."/>
            <person name="Morooka N."/>
            <person name="Yamamoto Y."/>
            <person name="Fujita K."/>
            <person name="Isono K."/>
            <person name="Choi S."/>
            <person name="Ohtsubo E."/>
            <person name="Baba T."/>
            <person name="Wanner B.L."/>
            <person name="Mori H."/>
            <person name="Horiuchi T."/>
        </authorList>
    </citation>
    <scope>NUCLEOTIDE SEQUENCE [LARGE SCALE GENOMIC DNA]</scope>
    <source>
        <strain>K12 / W3110 / ATCC 27325 / DSM 5911</strain>
    </source>
</reference>
<reference key="3">
    <citation type="journal article" date="1999" name="Electrophoresis">
        <title>Enrichment of low abundance proteins of Escherichia coli by hydroxyapatite chromatography.</title>
        <authorList>
            <person name="Fountoulakis M."/>
            <person name="Takacs M.-F."/>
            <person name="Berndt P."/>
            <person name="Langen H."/>
            <person name="Takacs B."/>
        </authorList>
    </citation>
    <scope>IDENTIFICATION BY MASS SPECTROMETRY</scope>
    <source>
        <strain>B / BL21</strain>
    </source>
</reference>
<organism>
    <name type="scientific">Escherichia coli (strain K12)</name>
    <dbReference type="NCBI Taxonomy" id="83333"/>
    <lineage>
        <taxon>Bacteria</taxon>
        <taxon>Pseudomonadati</taxon>
        <taxon>Pseudomonadota</taxon>
        <taxon>Gammaproteobacteria</taxon>
        <taxon>Enterobacterales</taxon>
        <taxon>Enterobacteriaceae</taxon>
        <taxon>Escherichia</taxon>
    </lineage>
</organism>
<evidence type="ECO:0000305" key="1"/>
<evidence type="ECO:0007829" key="2">
    <source>
        <dbReference type="PDB" id="3F4L"/>
    </source>
</evidence>
<dbReference type="EC" id="1.-.-.-"/>
<dbReference type="EMBL" id="U18997">
    <property type="protein sequence ID" value="AAA58238.1"/>
    <property type="molecule type" value="Genomic_DNA"/>
</dbReference>
<dbReference type="EMBL" id="U00096">
    <property type="protein sequence ID" value="AAC76465.1"/>
    <property type="molecule type" value="Genomic_DNA"/>
</dbReference>
<dbReference type="EMBL" id="AP009048">
    <property type="protein sequence ID" value="BAE77853.1"/>
    <property type="molecule type" value="Genomic_DNA"/>
</dbReference>
<dbReference type="PIR" id="C65140">
    <property type="entry name" value="C65140"/>
</dbReference>
<dbReference type="RefSeq" id="NP_417897.1">
    <property type="nucleotide sequence ID" value="NC_000913.3"/>
</dbReference>
<dbReference type="RefSeq" id="WP_000236293.1">
    <property type="nucleotide sequence ID" value="NZ_SSZK01000008.1"/>
</dbReference>
<dbReference type="PDB" id="3F4L">
    <property type="method" value="X-ray"/>
    <property type="resolution" value="2.00 A"/>
    <property type="chains" value="A/B/C/D/E/F=1-345"/>
</dbReference>
<dbReference type="PDBsum" id="3F4L"/>
<dbReference type="SMR" id="P46853"/>
<dbReference type="BioGRID" id="4262488">
    <property type="interactions" value="24"/>
</dbReference>
<dbReference type="DIP" id="DIP-12357N"/>
<dbReference type="FunCoup" id="P46853">
    <property type="interactions" value="136"/>
</dbReference>
<dbReference type="IntAct" id="P46853">
    <property type="interactions" value="21"/>
</dbReference>
<dbReference type="STRING" id="511145.b3440"/>
<dbReference type="jPOST" id="P46853"/>
<dbReference type="PaxDb" id="511145-b3440"/>
<dbReference type="EnsemblBacteria" id="AAC76465">
    <property type="protein sequence ID" value="AAC76465"/>
    <property type="gene ID" value="b3440"/>
</dbReference>
<dbReference type="GeneID" id="947944"/>
<dbReference type="KEGG" id="ecj:JW3403"/>
<dbReference type="KEGG" id="eco:b3440"/>
<dbReference type="KEGG" id="ecoc:C3026_18640"/>
<dbReference type="PATRIC" id="fig|1411691.4.peg.3289"/>
<dbReference type="EchoBASE" id="EB2778"/>
<dbReference type="eggNOG" id="COG0673">
    <property type="taxonomic scope" value="Bacteria"/>
</dbReference>
<dbReference type="HOGENOM" id="CLU_023194_19_0_6"/>
<dbReference type="InParanoid" id="P46853"/>
<dbReference type="OMA" id="HADSHFD"/>
<dbReference type="OrthoDB" id="9774191at2"/>
<dbReference type="PhylomeDB" id="P46853"/>
<dbReference type="BioCyc" id="EcoCyc:G7757-MONOMER"/>
<dbReference type="EvolutionaryTrace" id="P46853"/>
<dbReference type="PRO" id="PR:P46853"/>
<dbReference type="Proteomes" id="UP000000625">
    <property type="component" value="Chromosome"/>
</dbReference>
<dbReference type="GO" id="GO:0005829">
    <property type="term" value="C:cytosol"/>
    <property type="evidence" value="ECO:0000314"/>
    <property type="project" value="EcoCyc"/>
</dbReference>
<dbReference type="GO" id="GO:0000166">
    <property type="term" value="F:nucleotide binding"/>
    <property type="evidence" value="ECO:0007669"/>
    <property type="project" value="InterPro"/>
</dbReference>
<dbReference type="GO" id="GO:0102497">
    <property type="term" value="F:scyllo-inositol dehydrogenase (NADP+) activity"/>
    <property type="evidence" value="ECO:0000318"/>
    <property type="project" value="GO_Central"/>
</dbReference>
<dbReference type="GO" id="GO:0017000">
    <property type="term" value="P:antibiotic biosynthetic process"/>
    <property type="evidence" value="ECO:0000318"/>
    <property type="project" value="GO_Central"/>
</dbReference>
<dbReference type="FunFam" id="3.30.360.10:FF:000022">
    <property type="entry name" value="Oxidoreductase, NAD-binding"/>
    <property type="match status" value="1"/>
</dbReference>
<dbReference type="FunFam" id="3.40.50.720:FF:000228">
    <property type="entry name" value="Putative oxidoreductase yhhX"/>
    <property type="match status" value="1"/>
</dbReference>
<dbReference type="Gene3D" id="3.30.360.10">
    <property type="entry name" value="Dihydrodipicolinate Reductase, domain 2"/>
    <property type="match status" value="1"/>
</dbReference>
<dbReference type="Gene3D" id="3.40.50.720">
    <property type="entry name" value="NAD(P)-binding Rossmann-like Domain"/>
    <property type="match status" value="1"/>
</dbReference>
<dbReference type="InterPro" id="IPR004104">
    <property type="entry name" value="Gfo/Idh/MocA-like_OxRdtase_C"/>
</dbReference>
<dbReference type="InterPro" id="IPR000683">
    <property type="entry name" value="Gfo/Idh/MocA-like_OxRdtase_N"/>
</dbReference>
<dbReference type="InterPro" id="IPR051317">
    <property type="entry name" value="Gfo/Idh/MocA_oxidoreduct"/>
</dbReference>
<dbReference type="InterPro" id="IPR036291">
    <property type="entry name" value="NAD(P)-bd_dom_sf"/>
</dbReference>
<dbReference type="NCBIfam" id="NF007574">
    <property type="entry name" value="PRK10206.1"/>
    <property type="match status" value="1"/>
</dbReference>
<dbReference type="PANTHER" id="PTHR43708">
    <property type="entry name" value="CONSERVED EXPRESSED OXIDOREDUCTASE (EUROFUNG)"/>
    <property type="match status" value="1"/>
</dbReference>
<dbReference type="PANTHER" id="PTHR43708:SF7">
    <property type="entry name" value="OXIDOREDUCTASE"/>
    <property type="match status" value="1"/>
</dbReference>
<dbReference type="Pfam" id="PF01408">
    <property type="entry name" value="GFO_IDH_MocA"/>
    <property type="match status" value="1"/>
</dbReference>
<dbReference type="Pfam" id="PF02894">
    <property type="entry name" value="GFO_IDH_MocA_C"/>
    <property type="match status" value="1"/>
</dbReference>
<dbReference type="SUPFAM" id="SSF55347">
    <property type="entry name" value="Glyceraldehyde-3-phosphate dehydrogenase-like, C-terminal domain"/>
    <property type="match status" value="1"/>
</dbReference>
<dbReference type="SUPFAM" id="SSF51735">
    <property type="entry name" value="NAD(P)-binding Rossmann-fold domains"/>
    <property type="match status" value="1"/>
</dbReference>
<gene>
    <name type="primary">yhhX</name>
    <name type="ordered locus">b3440</name>
    <name type="ordered locus">JW3403</name>
</gene>
<feature type="chain" id="PRO_0000091791" description="Uncharacterized oxidoreductase YhhX">
    <location>
        <begin position="1"/>
        <end position="345"/>
    </location>
</feature>
<feature type="strand" evidence="2">
    <location>
        <begin position="3"/>
        <end position="8"/>
    </location>
</feature>
<feature type="helix" evidence="2">
    <location>
        <begin position="12"/>
        <end position="17"/>
    </location>
</feature>
<feature type="helix" evidence="2">
    <location>
        <begin position="19"/>
        <end position="22"/>
    </location>
</feature>
<feature type="turn" evidence="2">
    <location>
        <begin position="26"/>
        <end position="28"/>
    </location>
</feature>
<feature type="strand" evidence="2">
    <location>
        <begin position="29"/>
        <end position="35"/>
    </location>
</feature>
<feature type="helix" evidence="2">
    <location>
        <begin position="41"/>
        <end position="44"/>
    </location>
</feature>
<feature type="helix" evidence="2">
    <location>
        <begin position="46"/>
        <end position="48"/>
    </location>
</feature>
<feature type="strand" evidence="2">
    <location>
        <begin position="52"/>
        <end position="55"/>
    </location>
</feature>
<feature type="helix" evidence="2">
    <location>
        <begin position="58"/>
        <end position="61"/>
    </location>
</feature>
<feature type="strand" evidence="2">
    <location>
        <begin position="66"/>
        <end position="71"/>
    </location>
</feature>
<feature type="helix" evidence="2">
    <location>
        <begin position="75"/>
        <end position="77"/>
    </location>
</feature>
<feature type="helix" evidence="2">
    <location>
        <begin position="78"/>
        <end position="87"/>
    </location>
</feature>
<feature type="strand" evidence="2">
    <location>
        <begin position="91"/>
        <end position="94"/>
    </location>
</feature>
<feature type="strand" evidence="2">
    <location>
        <begin position="96"/>
        <end position="98"/>
    </location>
</feature>
<feature type="helix" evidence="2">
    <location>
        <begin position="102"/>
        <end position="114"/>
    </location>
</feature>
<feature type="strand" evidence="2">
    <location>
        <begin position="119"/>
        <end position="121"/>
    </location>
</feature>
<feature type="helix" evidence="2">
    <location>
        <begin position="124"/>
        <end position="127"/>
    </location>
</feature>
<feature type="helix" evidence="2">
    <location>
        <begin position="129"/>
        <end position="140"/>
    </location>
</feature>
<feature type="strand" evidence="2">
    <location>
        <begin position="145"/>
        <end position="152"/>
    </location>
</feature>
<feature type="helix" evidence="2">
    <location>
        <begin position="167"/>
        <end position="169"/>
    </location>
</feature>
<feature type="helix" evidence="2">
    <location>
        <begin position="171"/>
        <end position="174"/>
    </location>
</feature>
<feature type="helix" evidence="2">
    <location>
        <begin position="176"/>
        <end position="187"/>
    </location>
</feature>
<feature type="strand" evidence="2">
    <location>
        <begin position="191"/>
        <end position="198"/>
    </location>
</feature>
<feature type="strand" evidence="2">
    <location>
        <begin position="209"/>
        <end position="216"/>
    </location>
</feature>
<feature type="strand" evidence="2">
    <location>
        <begin position="219"/>
        <end position="225"/>
    </location>
</feature>
<feature type="strand" evidence="2">
    <location>
        <begin position="235"/>
        <end position="247"/>
    </location>
</feature>
<feature type="helix" evidence="2">
    <location>
        <begin position="253"/>
        <end position="258"/>
    </location>
</feature>
<feature type="turn" evidence="2">
    <location>
        <begin position="266"/>
        <end position="269"/>
    </location>
</feature>
<feature type="strand" evidence="2">
    <location>
        <begin position="275"/>
        <end position="280"/>
    </location>
</feature>
<feature type="strand" evidence="2">
    <location>
        <begin position="286"/>
        <end position="291"/>
    </location>
</feature>
<feature type="helix" evidence="2">
    <location>
        <begin position="300"/>
        <end position="311"/>
    </location>
</feature>
<feature type="helix" evidence="2">
    <location>
        <begin position="319"/>
        <end position="331"/>
    </location>
</feature>
<feature type="strand" evidence="2">
    <location>
        <begin position="334"/>
        <end position="342"/>
    </location>
</feature>
<sequence length="345" mass="38765">MVINCAFIGFGKSTTRYHLPYVLNRKDSWHVAHIFRRHAKPEEQAPIYSHIHFTSDLDEVLNDPDVKLVVVCTHADSHFEYAKRALEAGKNVLVEKPFTPTLAQAKELFALAKSKGLTVTPYQNRRFDSCFLTAKKAIESGKLGEIVEVESHFDYYRPVAETKPGLPQDGAFYGLGVHTMDQIISLFGRPDHVAYDIRSLRNKANPDDTFEAQLFYGDLKAIVKTSHLVKIDYPKFIVHGKKGSFIKYGIDQQETSLKANIMPGEPGFAADDSVGVLEYVNDEGVTVREEMKPEMGDYGRVYDALYQTITHGAPNYVKESEVLTNLEILERGFEQASPSTVTLAK</sequence>
<proteinExistence type="evidence at protein level"/>
<accession>P46853</accession>
<accession>Q2M7A3</accession>